<organism>
    <name type="scientific">Helicobacter hepaticus (strain ATCC 51449 / 3B1)</name>
    <dbReference type="NCBI Taxonomy" id="235279"/>
    <lineage>
        <taxon>Bacteria</taxon>
        <taxon>Pseudomonadati</taxon>
        <taxon>Campylobacterota</taxon>
        <taxon>Epsilonproteobacteria</taxon>
        <taxon>Campylobacterales</taxon>
        <taxon>Helicobacteraceae</taxon>
        <taxon>Helicobacter</taxon>
    </lineage>
</organism>
<proteinExistence type="inferred from homology"/>
<feature type="chain" id="PRO_1000058600" description="3-phosphoshikimate 1-carboxyvinyltransferase">
    <location>
        <begin position="1"/>
        <end position="438"/>
    </location>
</feature>
<feature type="active site" description="Proton acceptor" evidence="1">
    <location>
        <position position="321"/>
    </location>
</feature>
<feature type="binding site" evidence="1">
    <location>
        <position position="23"/>
    </location>
    <ligand>
        <name>3-phosphoshikimate</name>
        <dbReference type="ChEBI" id="CHEBI:145989"/>
    </ligand>
</feature>
<feature type="binding site" evidence="1">
    <location>
        <position position="23"/>
    </location>
    <ligand>
        <name>phosphoenolpyruvate</name>
        <dbReference type="ChEBI" id="CHEBI:58702"/>
    </ligand>
</feature>
<feature type="binding site" evidence="1">
    <location>
        <position position="24"/>
    </location>
    <ligand>
        <name>3-phosphoshikimate</name>
        <dbReference type="ChEBI" id="CHEBI:145989"/>
    </ligand>
</feature>
<feature type="binding site" evidence="1">
    <location>
        <position position="28"/>
    </location>
    <ligand>
        <name>3-phosphoshikimate</name>
        <dbReference type="ChEBI" id="CHEBI:145989"/>
    </ligand>
</feature>
<feature type="binding site" evidence="1">
    <location>
        <position position="94"/>
    </location>
    <ligand>
        <name>phosphoenolpyruvate</name>
        <dbReference type="ChEBI" id="CHEBI:58702"/>
    </ligand>
</feature>
<feature type="binding site" evidence="1">
    <location>
        <position position="122"/>
    </location>
    <ligand>
        <name>phosphoenolpyruvate</name>
        <dbReference type="ChEBI" id="CHEBI:58702"/>
    </ligand>
</feature>
<feature type="binding site" evidence="1">
    <location>
        <position position="167"/>
    </location>
    <ligand>
        <name>3-phosphoshikimate</name>
        <dbReference type="ChEBI" id="CHEBI:145989"/>
    </ligand>
</feature>
<feature type="binding site" evidence="1">
    <location>
        <position position="169"/>
    </location>
    <ligand>
        <name>3-phosphoshikimate</name>
        <dbReference type="ChEBI" id="CHEBI:145989"/>
    </ligand>
</feature>
<feature type="binding site" evidence="1">
    <location>
        <position position="169"/>
    </location>
    <ligand>
        <name>phosphoenolpyruvate</name>
        <dbReference type="ChEBI" id="CHEBI:58702"/>
    </ligand>
</feature>
<feature type="binding site" evidence="1">
    <location>
        <position position="321"/>
    </location>
    <ligand>
        <name>3-phosphoshikimate</name>
        <dbReference type="ChEBI" id="CHEBI:145989"/>
    </ligand>
</feature>
<feature type="binding site" evidence="1">
    <location>
        <position position="348"/>
    </location>
    <ligand>
        <name>3-phosphoshikimate</name>
        <dbReference type="ChEBI" id="CHEBI:145989"/>
    </ligand>
</feature>
<feature type="binding site" evidence="1">
    <location>
        <position position="352"/>
    </location>
    <ligand>
        <name>phosphoenolpyruvate</name>
        <dbReference type="ChEBI" id="CHEBI:58702"/>
    </ligand>
</feature>
<feature type="binding site" evidence="1">
    <location>
        <position position="393"/>
    </location>
    <ligand>
        <name>phosphoenolpyruvate</name>
        <dbReference type="ChEBI" id="CHEBI:58702"/>
    </ligand>
</feature>
<protein>
    <recommendedName>
        <fullName evidence="1">3-phosphoshikimate 1-carboxyvinyltransferase</fullName>
        <ecNumber evidence="1">2.5.1.19</ecNumber>
    </recommendedName>
    <alternativeName>
        <fullName evidence="1">5-enolpyruvylshikimate-3-phosphate synthase</fullName>
        <shortName evidence="1">EPSP synthase</shortName>
        <shortName evidence="1">EPSPS</shortName>
    </alternativeName>
</protein>
<keyword id="KW-0028">Amino-acid biosynthesis</keyword>
<keyword id="KW-0057">Aromatic amino acid biosynthesis</keyword>
<keyword id="KW-0963">Cytoplasm</keyword>
<keyword id="KW-1185">Reference proteome</keyword>
<keyword id="KW-0808">Transferase</keyword>
<dbReference type="EC" id="2.5.1.19" evidence="1"/>
<dbReference type="EMBL" id="AE017125">
    <property type="protein sequence ID" value="AAP76736.1"/>
    <property type="molecule type" value="Genomic_DNA"/>
</dbReference>
<dbReference type="RefSeq" id="WP_011114982.1">
    <property type="nucleotide sequence ID" value="NC_004917.1"/>
</dbReference>
<dbReference type="SMR" id="Q7VJV4"/>
<dbReference type="STRING" id="235279.HH_0139"/>
<dbReference type="KEGG" id="hhe:HH_0139"/>
<dbReference type="eggNOG" id="COG0128">
    <property type="taxonomic scope" value="Bacteria"/>
</dbReference>
<dbReference type="HOGENOM" id="CLU_024321_0_1_7"/>
<dbReference type="OrthoDB" id="9809920at2"/>
<dbReference type="UniPathway" id="UPA00053">
    <property type="reaction ID" value="UER00089"/>
</dbReference>
<dbReference type="Proteomes" id="UP000002495">
    <property type="component" value="Chromosome"/>
</dbReference>
<dbReference type="GO" id="GO:0005737">
    <property type="term" value="C:cytoplasm"/>
    <property type="evidence" value="ECO:0007669"/>
    <property type="project" value="UniProtKB-SubCell"/>
</dbReference>
<dbReference type="GO" id="GO:0003866">
    <property type="term" value="F:3-phosphoshikimate 1-carboxyvinyltransferase activity"/>
    <property type="evidence" value="ECO:0007669"/>
    <property type="project" value="UniProtKB-UniRule"/>
</dbReference>
<dbReference type="GO" id="GO:0008652">
    <property type="term" value="P:amino acid biosynthetic process"/>
    <property type="evidence" value="ECO:0007669"/>
    <property type="project" value="UniProtKB-KW"/>
</dbReference>
<dbReference type="GO" id="GO:0009073">
    <property type="term" value="P:aromatic amino acid family biosynthetic process"/>
    <property type="evidence" value="ECO:0007669"/>
    <property type="project" value="UniProtKB-KW"/>
</dbReference>
<dbReference type="GO" id="GO:0009423">
    <property type="term" value="P:chorismate biosynthetic process"/>
    <property type="evidence" value="ECO:0007669"/>
    <property type="project" value="UniProtKB-UniRule"/>
</dbReference>
<dbReference type="CDD" id="cd01556">
    <property type="entry name" value="EPSP_synthase"/>
    <property type="match status" value="1"/>
</dbReference>
<dbReference type="FunFam" id="3.65.10.10:FF:000005">
    <property type="entry name" value="3-phosphoshikimate 1-carboxyvinyltransferase"/>
    <property type="match status" value="1"/>
</dbReference>
<dbReference type="Gene3D" id="3.65.10.10">
    <property type="entry name" value="Enolpyruvate transferase domain"/>
    <property type="match status" value="2"/>
</dbReference>
<dbReference type="HAMAP" id="MF_00210">
    <property type="entry name" value="EPSP_synth"/>
    <property type="match status" value="1"/>
</dbReference>
<dbReference type="InterPro" id="IPR001986">
    <property type="entry name" value="Enolpyruvate_Tfrase_dom"/>
</dbReference>
<dbReference type="InterPro" id="IPR036968">
    <property type="entry name" value="Enolpyruvate_Tfrase_sf"/>
</dbReference>
<dbReference type="InterPro" id="IPR006264">
    <property type="entry name" value="EPSP_synthase"/>
</dbReference>
<dbReference type="InterPro" id="IPR023193">
    <property type="entry name" value="EPSP_synthase_CS"/>
</dbReference>
<dbReference type="InterPro" id="IPR013792">
    <property type="entry name" value="RNA3'P_cycl/enolpyr_Trfase_a/b"/>
</dbReference>
<dbReference type="NCBIfam" id="TIGR01356">
    <property type="entry name" value="aroA"/>
    <property type="match status" value="1"/>
</dbReference>
<dbReference type="PANTHER" id="PTHR21090">
    <property type="entry name" value="AROM/DEHYDROQUINATE SYNTHASE"/>
    <property type="match status" value="1"/>
</dbReference>
<dbReference type="PANTHER" id="PTHR21090:SF5">
    <property type="entry name" value="PENTAFUNCTIONAL AROM POLYPEPTIDE"/>
    <property type="match status" value="1"/>
</dbReference>
<dbReference type="Pfam" id="PF00275">
    <property type="entry name" value="EPSP_synthase"/>
    <property type="match status" value="1"/>
</dbReference>
<dbReference type="PIRSF" id="PIRSF000505">
    <property type="entry name" value="EPSPS"/>
    <property type="match status" value="1"/>
</dbReference>
<dbReference type="SUPFAM" id="SSF55205">
    <property type="entry name" value="EPT/RTPC-like"/>
    <property type="match status" value="1"/>
</dbReference>
<dbReference type="PROSITE" id="PS00104">
    <property type="entry name" value="EPSP_SYNTHASE_1"/>
    <property type="match status" value="1"/>
</dbReference>
<dbReference type="PROSITE" id="PS00885">
    <property type="entry name" value="EPSP_SYNTHASE_2"/>
    <property type="match status" value="1"/>
</dbReference>
<reference key="1">
    <citation type="journal article" date="2003" name="Proc. Natl. Acad. Sci. U.S.A.">
        <title>The complete genome sequence of the carcinogenic bacterium Helicobacter hepaticus.</title>
        <authorList>
            <person name="Suerbaum S."/>
            <person name="Josenhans C."/>
            <person name="Sterzenbach T."/>
            <person name="Drescher B."/>
            <person name="Brandt P."/>
            <person name="Bell M."/>
            <person name="Droege M."/>
            <person name="Fartmann B."/>
            <person name="Fischer H.-P."/>
            <person name="Ge Z."/>
            <person name="Hoerster A."/>
            <person name="Holland R."/>
            <person name="Klein K."/>
            <person name="Koenig J."/>
            <person name="Macko L."/>
            <person name="Mendz G.L."/>
            <person name="Nyakatura G."/>
            <person name="Schauer D.B."/>
            <person name="Shen Z."/>
            <person name="Weber J."/>
            <person name="Frosch M."/>
            <person name="Fox J.G."/>
        </authorList>
    </citation>
    <scope>NUCLEOTIDE SEQUENCE [LARGE SCALE GENOMIC DNA]</scope>
    <source>
        <strain>ATCC 51449 / 3B1</strain>
    </source>
</reference>
<gene>
    <name evidence="1" type="primary">aroA</name>
    <name type="ordered locus">HH_0139</name>
</gene>
<sequence length="438" mass="47886">MRITKIAPAQSFEREFDGIATDKSISHRAAIFALLSSAPCEVEGYLMGEDTLHTLHIARELGLGIEQKGSVLRLIPPRNGICEPHKVLDCGNAGTGMRLFAGLLSGVKGHFVLTGDEYLNARPMKRITEPLSAIGACINGRENNAYAPLSIVGAQLQTFDYKSTIASAQVKSAMILAGLQTAGQSRFYEPLLSRNHTENMLRGMGVHIQERECEDGGYEVVFEGLKETNKQLEAFKFQVPADPSSAFYFAVAACVLGAKVKLKNVLLNKTRIEAFKILESMGAKVAYHHLSSLYEEVGDIEVQGGSLKAVRVDSRIAWLIDEIPALSICFALAKGKSEVYNAKELRVKESDRIRATITNLRVMGIRCEEFDDGFSVYGGELKRARVSSFGDHRIAMSFAIAQLACGGEIEDSECIDVSFPHFLTLLSQITAVENANES</sequence>
<evidence type="ECO:0000255" key="1">
    <source>
        <dbReference type="HAMAP-Rule" id="MF_00210"/>
    </source>
</evidence>
<name>AROA_HELHP</name>
<accession>Q7VJV4</accession>
<comment type="function">
    <text evidence="1">Catalyzes the transfer of the enolpyruvyl moiety of phosphoenolpyruvate (PEP) to the 5-hydroxyl of shikimate-3-phosphate (S3P) to produce enolpyruvyl shikimate-3-phosphate and inorganic phosphate.</text>
</comment>
<comment type="catalytic activity">
    <reaction evidence="1">
        <text>3-phosphoshikimate + phosphoenolpyruvate = 5-O-(1-carboxyvinyl)-3-phosphoshikimate + phosphate</text>
        <dbReference type="Rhea" id="RHEA:21256"/>
        <dbReference type="ChEBI" id="CHEBI:43474"/>
        <dbReference type="ChEBI" id="CHEBI:57701"/>
        <dbReference type="ChEBI" id="CHEBI:58702"/>
        <dbReference type="ChEBI" id="CHEBI:145989"/>
        <dbReference type="EC" id="2.5.1.19"/>
    </reaction>
    <physiologicalReaction direction="left-to-right" evidence="1">
        <dbReference type="Rhea" id="RHEA:21257"/>
    </physiologicalReaction>
</comment>
<comment type="pathway">
    <text evidence="1">Metabolic intermediate biosynthesis; chorismate biosynthesis; chorismate from D-erythrose 4-phosphate and phosphoenolpyruvate: step 6/7.</text>
</comment>
<comment type="subunit">
    <text evidence="1">Monomer.</text>
</comment>
<comment type="subcellular location">
    <subcellularLocation>
        <location evidence="1">Cytoplasm</location>
    </subcellularLocation>
</comment>
<comment type="similarity">
    <text evidence="1">Belongs to the EPSP synthase family.</text>
</comment>